<reference key="1">
    <citation type="submission" date="2006-01" db="EMBL/GenBank/DDBJ databases">
        <title>Complete sequence of Anaeromyxobacter dehalogenans 2CP-C.</title>
        <authorList>
            <person name="Copeland A."/>
            <person name="Lucas S."/>
            <person name="Lapidus A."/>
            <person name="Barry K."/>
            <person name="Detter J.C."/>
            <person name="Glavina T."/>
            <person name="Hammon N."/>
            <person name="Israni S."/>
            <person name="Pitluck S."/>
            <person name="Brettin T."/>
            <person name="Bruce D."/>
            <person name="Han C."/>
            <person name="Tapia R."/>
            <person name="Gilna P."/>
            <person name="Kiss H."/>
            <person name="Schmutz J."/>
            <person name="Larimer F."/>
            <person name="Land M."/>
            <person name="Kyrpides N."/>
            <person name="Anderson I."/>
            <person name="Sanford R.A."/>
            <person name="Ritalahti K.M."/>
            <person name="Thomas H.S."/>
            <person name="Kirby J.R."/>
            <person name="Zhulin I.B."/>
            <person name="Loeffler F.E."/>
            <person name="Richardson P."/>
        </authorList>
    </citation>
    <scope>NUCLEOTIDE SEQUENCE [LARGE SCALE GENOMIC DNA]</scope>
    <source>
        <strain>2CP-C</strain>
    </source>
</reference>
<accession>Q2IPX8</accession>
<protein>
    <recommendedName>
        <fullName evidence="1">3-hydroxyacyl-[acyl-carrier-protein] dehydratase FabZ</fullName>
        <ecNumber evidence="1">4.2.1.59</ecNumber>
    </recommendedName>
    <alternativeName>
        <fullName evidence="1">(3R)-hydroxymyristoyl-[acyl-carrier-protein] dehydratase</fullName>
        <shortName evidence="1">(3R)-hydroxymyristoyl-ACP dehydrase</shortName>
    </alternativeName>
    <alternativeName>
        <fullName evidence="1">Beta-hydroxyacyl-ACP dehydratase</fullName>
    </alternativeName>
</protein>
<keyword id="KW-0963">Cytoplasm</keyword>
<keyword id="KW-0441">Lipid A biosynthesis</keyword>
<keyword id="KW-0444">Lipid biosynthesis</keyword>
<keyword id="KW-0443">Lipid metabolism</keyword>
<keyword id="KW-0456">Lyase</keyword>
<keyword id="KW-1185">Reference proteome</keyword>
<sequence>MSESAERKSILDVVGIQELLPHRPPFLLVDRVVEFEAHRRLVALKGVTMNEPFFQGHFPAQPVMPGVLILEALAQAAALLATMSLKPDEVKDKITYLMGIDGARFRRPVVPGDRLELEVEVTKQKGAVWKQTGVARVDGQVVAEAEFMAMLADRER</sequence>
<proteinExistence type="inferred from homology"/>
<comment type="function">
    <text evidence="1">Involved in unsaturated fatty acids biosynthesis. Catalyzes the dehydration of short chain beta-hydroxyacyl-ACPs and long chain saturated and unsaturated beta-hydroxyacyl-ACPs.</text>
</comment>
<comment type="catalytic activity">
    <reaction evidence="1">
        <text>a (3R)-hydroxyacyl-[ACP] = a (2E)-enoyl-[ACP] + H2O</text>
        <dbReference type="Rhea" id="RHEA:13097"/>
        <dbReference type="Rhea" id="RHEA-COMP:9925"/>
        <dbReference type="Rhea" id="RHEA-COMP:9945"/>
        <dbReference type="ChEBI" id="CHEBI:15377"/>
        <dbReference type="ChEBI" id="CHEBI:78784"/>
        <dbReference type="ChEBI" id="CHEBI:78827"/>
        <dbReference type="EC" id="4.2.1.59"/>
    </reaction>
</comment>
<comment type="subcellular location">
    <subcellularLocation>
        <location evidence="1">Cytoplasm</location>
    </subcellularLocation>
</comment>
<comment type="similarity">
    <text evidence="1">Belongs to the thioester dehydratase family. FabZ subfamily.</text>
</comment>
<evidence type="ECO:0000255" key="1">
    <source>
        <dbReference type="HAMAP-Rule" id="MF_00406"/>
    </source>
</evidence>
<gene>
    <name evidence="1" type="primary">fabZ</name>
    <name type="ordered locus">Adeh_1084</name>
</gene>
<feature type="chain" id="PRO_0000242885" description="3-hydroxyacyl-[acyl-carrier-protein] dehydratase FabZ">
    <location>
        <begin position="1"/>
        <end position="156"/>
    </location>
</feature>
<feature type="active site" evidence="1">
    <location>
        <position position="57"/>
    </location>
</feature>
<organism>
    <name type="scientific">Anaeromyxobacter dehalogenans (strain 2CP-C)</name>
    <dbReference type="NCBI Taxonomy" id="290397"/>
    <lineage>
        <taxon>Bacteria</taxon>
        <taxon>Pseudomonadati</taxon>
        <taxon>Myxococcota</taxon>
        <taxon>Myxococcia</taxon>
        <taxon>Myxococcales</taxon>
        <taxon>Cystobacterineae</taxon>
        <taxon>Anaeromyxobacteraceae</taxon>
        <taxon>Anaeromyxobacter</taxon>
    </lineage>
</organism>
<dbReference type="EC" id="4.2.1.59" evidence="1"/>
<dbReference type="EMBL" id="CP000251">
    <property type="protein sequence ID" value="ABC80859.1"/>
    <property type="molecule type" value="Genomic_DNA"/>
</dbReference>
<dbReference type="RefSeq" id="WP_011420142.1">
    <property type="nucleotide sequence ID" value="NC_007760.1"/>
</dbReference>
<dbReference type="SMR" id="Q2IPX8"/>
<dbReference type="STRING" id="290397.Adeh_1084"/>
<dbReference type="KEGG" id="ade:Adeh_1084"/>
<dbReference type="eggNOG" id="COG0764">
    <property type="taxonomic scope" value="Bacteria"/>
</dbReference>
<dbReference type="HOGENOM" id="CLU_078912_3_0_7"/>
<dbReference type="OrthoDB" id="9772788at2"/>
<dbReference type="Proteomes" id="UP000001935">
    <property type="component" value="Chromosome"/>
</dbReference>
<dbReference type="GO" id="GO:0005737">
    <property type="term" value="C:cytoplasm"/>
    <property type="evidence" value="ECO:0007669"/>
    <property type="project" value="UniProtKB-SubCell"/>
</dbReference>
<dbReference type="GO" id="GO:0016020">
    <property type="term" value="C:membrane"/>
    <property type="evidence" value="ECO:0007669"/>
    <property type="project" value="GOC"/>
</dbReference>
<dbReference type="GO" id="GO:0019171">
    <property type="term" value="F:(3R)-hydroxyacyl-[acyl-carrier-protein] dehydratase activity"/>
    <property type="evidence" value="ECO:0007669"/>
    <property type="project" value="UniProtKB-EC"/>
</dbReference>
<dbReference type="GO" id="GO:0006633">
    <property type="term" value="P:fatty acid biosynthetic process"/>
    <property type="evidence" value="ECO:0007669"/>
    <property type="project" value="UniProtKB-UniRule"/>
</dbReference>
<dbReference type="GO" id="GO:0009245">
    <property type="term" value="P:lipid A biosynthetic process"/>
    <property type="evidence" value="ECO:0007669"/>
    <property type="project" value="UniProtKB-UniRule"/>
</dbReference>
<dbReference type="CDD" id="cd01288">
    <property type="entry name" value="FabZ"/>
    <property type="match status" value="1"/>
</dbReference>
<dbReference type="FunFam" id="3.10.129.10:FF:000001">
    <property type="entry name" value="3-hydroxyacyl-[acyl-carrier-protein] dehydratase FabZ"/>
    <property type="match status" value="1"/>
</dbReference>
<dbReference type="Gene3D" id="3.10.129.10">
    <property type="entry name" value="Hotdog Thioesterase"/>
    <property type="match status" value="1"/>
</dbReference>
<dbReference type="HAMAP" id="MF_00406">
    <property type="entry name" value="FabZ"/>
    <property type="match status" value="1"/>
</dbReference>
<dbReference type="InterPro" id="IPR013114">
    <property type="entry name" value="FabA_FabZ"/>
</dbReference>
<dbReference type="InterPro" id="IPR010084">
    <property type="entry name" value="FabZ"/>
</dbReference>
<dbReference type="InterPro" id="IPR029069">
    <property type="entry name" value="HotDog_dom_sf"/>
</dbReference>
<dbReference type="NCBIfam" id="TIGR01750">
    <property type="entry name" value="fabZ"/>
    <property type="match status" value="1"/>
</dbReference>
<dbReference type="NCBIfam" id="NF000582">
    <property type="entry name" value="PRK00006.1"/>
    <property type="match status" value="1"/>
</dbReference>
<dbReference type="PANTHER" id="PTHR30272">
    <property type="entry name" value="3-HYDROXYACYL-[ACYL-CARRIER-PROTEIN] DEHYDRATASE"/>
    <property type="match status" value="1"/>
</dbReference>
<dbReference type="PANTHER" id="PTHR30272:SF1">
    <property type="entry name" value="3-HYDROXYACYL-[ACYL-CARRIER-PROTEIN] DEHYDRATASE"/>
    <property type="match status" value="1"/>
</dbReference>
<dbReference type="Pfam" id="PF07977">
    <property type="entry name" value="FabA"/>
    <property type="match status" value="1"/>
</dbReference>
<dbReference type="SUPFAM" id="SSF54637">
    <property type="entry name" value="Thioesterase/thiol ester dehydrase-isomerase"/>
    <property type="match status" value="1"/>
</dbReference>
<name>FABZ_ANADE</name>